<proteinExistence type="predicted"/>
<reference key="1">
    <citation type="journal article" date="1992" name="J. Bacteriol.">
        <title>Mutation of the miaA gene of Agrobacterium tumefaciens results in reduced vir gene expression.</title>
        <authorList>
            <person name="Gray J."/>
            <person name="Wang J."/>
            <person name="Gelvin S.B."/>
        </authorList>
    </citation>
    <scope>NUCLEOTIDE SEQUENCE [GENOMIC DNA]</scope>
</reference>
<dbReference type="EMBL" id="M83532">
    <property type="protein sequence ID" value="AAA22090.1"/>
    <property type="molecule type" value="Genomic_DNA"/>
</dbReference>
<dbReference type="SMR" id="P38437"/>
<feature type="chain" id="PRO_0000066311" description="Uncharacterized protein in miaA 5'region">
    <location>
        <begin position="1" status="less than"/>
        <end position="34"/>
    </location>
</feature>
<feature type="non-terminal residue">
    <location>
        <position position="1"/>
    </location>
</feature>
<sequence length="34" mass="3458">MGFPISAAAIALRACSAAVPRGRAISQAMPWASQ</sequence>
<name>YMIA_RHIRD</name>
<organism>
    <name type="scientific">Rhizobium radiobacter</name>
    <name type="common">Agrobacterium tumefaciens</name>
    <name type="synonym">Agrobacterium radiobacter</name>
    <dbReference type="NCBI Taxonomy" id="358"/>
    <lineage>
        <taxon>Bacteria</taxon>
        <taxon>Pseudomonadati</taxon>
        <taxon>Pseudomonadota</taxon>
        <taxon>Alphaproteobacteria</taxon>
        <taxon>Hyphomicrobiales</taxon>
        <taxon>Rhizobiaceae</taxon>
        <taxon>Rhizobium/Agrobacterium group</taxon>
        <taxon>Agrobacterium</taxon>
        <taxon>Agrobacterium tumefaciens complex</taxon>
    </lineage>
</organism>
<protein>
    <recommendedName>
        <fullName>Uncharacterized protein in miaA 5'region</fullName>
    </recommendedName>
    <alternativeName>
        <fullName>ORF1</fullName>
    </alternativeName>
</protein>
<accession>P38437</accession>